<feature type="signal peptide" evidence="3">
    <location>
        <begin position="1"/>
        <end position="36"/>
    </location>
</feature>
<feature type="propeptide" id="PRO_0000401061" evidence="2">
    <location>
        <begin position="37"/>
        <end position="39"/>
    </location>
</feature>
<feature type="chain" id="PRO_0000401062" description="Tripeptidyl aminopeptidase" evidence="2 3">
    <location>
        <begin position="40"/>
        <end position="541"/>
    </location>
</feature>
<feature type="domain" description="AB hydrolase-1" evidence="3">
    <location>
        <begin position="123"/>
        <end position="501"/>
    </location>
</feature>
<feature type="active site" description="Nucleophile" evidence="1">
    <location>
        <position position="249"/>
    </location>
</feature>
<feature type="active site" evidence="1">
    <location>
        <position position="474"/>
    </location>
</feature>
<feature type="active site" description="Proton donor" evidence="1">
    <location>
        <position position="503"/>
    </location>
</feature>
<sequence length="541" mass="58536">MRKSSIRRRATAFGTAGALVTATLIAGAVSAPAASAAPADGHGHGHGHGRSWDREARGAAIAAARAARAGIDWEDCAADWNLPKPIQCGYVTVPMDYAKPYGKQIRLAVDRIGNTGTRSERQGALIYNPGGPGGSGLRFPARVTSKSAVWANTAKAYDFVGFDPRGVGHSAPISCVDPQEFVKAPKADPVPGSEADKRAQRKLAREYAEGCFERSGEMLPHMTTPNTARDLDVIRAALGEKKLNYLGVSYGTYLGAVYGTLFPDHVRRMVVDSVVNPSRDKIWYQANLDQDVAFEGRWKDWQDWVAANDAAYHLGDTRAEVQDQWLKLRAAAAKKPLGGVVGPAELISFFQSAPYYDSAWAPTAEIFSKYVAGDTQALVDAAAPDLSDTAGNASAENGNAVYTAVECTDAKWPANWRTWDRDNTRLHRDHPFMTWANAWMNLPCATWPVKQQTPLNVKTGKGLPPVLIVQSERDAATPYEGAVELHQRFRGSRLITERDAGSHGVTGLVNPCINDRVDTYLLTGGTDARDVTCAPHATPRP</sequence>
<organism>
    <name type="scientific">Streptomyces coelicolor (strain ATCC BAA-471 / A3(2) / M145)</name>
    <dbReference type="NCBI Taxonomy" id="100226"/>
    <lineage>
        <taxon>Bacteria</taxon>
        <taxon>Bacillati</taxon>
        <taxon>Actinomycetota</taxon>
        <taxon>Actinomycetes</taxon>
        <taxon>Kitasatosporales</taxon>
        <taxon>Streptomycetaceae</taxon>
        <taxon>Streptomyces</taxon>
        <taxon>Streptomyces albidoflavus group</taxon>
    </lineage>
</organism>
<protein>
    <recommendedName>
        <fullName evidence="2">Tripeptidyl aminopeptidase</fullName>
        <shortName evidence="2">Tap</shortName>
        <ecNumber>3.4.14.-</ecNumber>
    </recommendedName>
</protein>
<evidence type="ECO:0000250" key="1"/>
<evidence type="ECO:0000250" key="2">
    <source>
        <dbReference type="UniProtKB" id="Q54410"/>
    </source>
</evidence>
<evidence type="ECO:0000255" key="3"/>
<evidence type="ECO:0000312" key="4">
    <source>
        <dbReference type="EMBL" id="CAC01454.1"/>
    </source>
</evidence>
<accession>Q9FCD7</accession>
<comment type="function">
    <text evidence="2">Cleaves tripeptides from the N-termini of proteins. Does not cleave mono- or dipeptides, or N-terminally blocked peptides (By similarity).</text>
</comment>
<comment type="subcellular location">
    <subcellularLocation>
        <location evidence="2">Secreted</location>
    </subcellularLocation>
</comment>
<comment type="similarity">
    <text evidence="2">Belongs to the peptidase S33 family.</text>
</comment>
<dbReference type="EC" id="3.4.14.-"/>
<dbReference type="EMBL" id="AL939108">
    <property type="protein sequence ID" value="CAC01454.1"/>
    <property type="molecule type" value="Genomic_DNA"/>
</dbReference>
<dbReference type="RefSeq" id="NP_625518.1">
    <property type="nucleotide sequence ID" value="NC_003888.3"/>
</dbReference>
<dbReference type="RefSeq" id="WP_011027660.1">
    <property type="nucleotide sequence ID" value="NZ_VNID01000006.1"/>
</dbReference>
<dbReference type="SMR" id="Q9FCD7"/>
<dbReference type="STRING" id="100226.gene:17758813"/>
<dbReference type="ESTHER" id="strco-TAP">
    <property type="family name" value="Tiancimycin-TnmK-Tripeptidase-HIP"/>
</dbReference>
<dbReference type="MEROPS" id="S33.002"/>
<dbReference type="PaxDb" id="100226-SCO1230"/>
<dbReference type="KEGG" id="sco:SCO1230"/>
<dbReference type="PATRIC" id="fig|100226.15.peg.1229"/>
<dbReference type="eggNOG" id="COG0596">
    <property type="taxonomic scope" value="Bacteria"/>
</dbReference>
<dbReference type="HOGENOM" id="CLU_013364_3_2_11"/>
<dbReference type="InParanoid" id="Q9FCD7"/>
<dbReference type="OrthoDB" id="4498590at2"/>
<dbReference type="PhylomeDB" id="Q9FCD7"/>
<dbReference type="Proteomes" id="UP000001973">
    <property type="component" value="Chromosome"/>
</dbReference>
<dbReference type="GO" id="GO:0005576">
    <property type="term" value="C:extracellular region"/>
    <property type="evidence" value="ECO:0000250"/>
    <property type="project" value="UniProtKB"/>
</dbReference>
<dbReference type="GO" id="GO:0045148">
    <property type="term" value="F:tripeptide aminopeptidase activity"/>
    <property type="evidence" value="ECO:0000250"/>
    <property type="project" value="UniProtKB"/>
</dbReference>
<dbReference type="GO" id="GO:0006508">
    <property type="term" value="P:proteolysis"/>
    <property type="evidence" value="ECO:0000250"/>
    <property type="project" value="UniProtKB"/>
</dbReference>
<dbReference type="Gene3D" id="3.40.50.1820">
    <property type="entry name" value="alpha/beta hydrolase"/>
    <property type="match status" value="1"/>
</dbReference>
<dbReference type="InterPro" id="IPR029058">
    <property type="entry name" value="AB_hydrolase_fold"/>
</dbReference>
<dbReference type="InterPro" id="IPR013595">
    <property type="entry name" value="Pept_S33_TAP-like_C"/>
</dbReference>
<dbReference type="InterPro" id="IPR051601">
    <property type="entry name" value="Serine_prot/Carboxylest_S33"/>
</dbReference>
<dbReference type="PANTHER" id="PTHR43248">
    <property type="entry name" value="2-SUCCINYL-6-HYDROXY-2,4-CYCLOHEXADIENE-1-CARBOXYLATE SYNTHASE"/>
    <property type="match status" value="1"/>
</dbReference>
<dbReference type="PANTHER" id="PTHR43248:SF29">
    <property type="entry name" value="TRIPEPTIDYL AMINOPEPTIDASE"/>
    <property type="match status" value="1"/>
</dbReference>
<dbReference type="Pfam" id="PF08386">
    <property type="entry name" value="Abhydrolase_4"/>
    <property type="match status" value="1"/>
</dbReference>
<dbReference type="SUPFAM" id="SSF53474">
    <property type="entry name" value="alpha/beta-Hydrolases"/>
    <property type="match status" value="1"/>
</dbReference>
<gene>
    <name evidence="2" type="primary">tap</name>
    <name type="ordered locus">SCO1230</name>
    <name type="ORF">2SCG1.05c</name>
</gene>
<reference evidence="4" key="1">
    <citation type="journal article" date="2002" name="Nature">
        <title>Complete genome sequence of the model actinomycete Streptomyces coelicolor A3(2).</title>
        <authorList>
            <person name="Bentley S.D."/>
            <person name="Chater K.F."/>
            <person name="Cerdeno-Tarraga A.-M."/>
            <person name="Challis G.L."/>
            <person name="Thomson N.R."/>
            <person name="James K.D."/>
            <person name="Harris D.E."/>
            <person name="Quail M.A."/>
            <person name="Kieser H."/>
            <person name="Harper D."/>
            <person name="Bateman A."/>
            <person name="Brown S."/>
            <person name="Chandra G."/>
            <person name="Chen C.W."/>
            <person name="Collins M."/>
            <person name="Cronin A."/>
            <person name="Fraser A."/>
            <person name="Goble A."/>
            <person name="Hidalgo J."/>
            <person name="Hornsby T."/>
            <person name="Howarth S."/>
            <person name="Huang C.-H."/>
            <person name="Kieser T."/>
            <person name="Larke L."/>
            <person name="Murphy L.D."/>
            <person name="Oliver K."/>
            <person name="O'Neil S."/>
            <person name="Rabbinowitsch E."/>
            <person name="Rajandream M.A."/>
            <person name="Rutherford K.M."/>
            <person name="Rutter S."/>
            <person name="Seeger K."/>
            <person name="Saunders D."/>
            <person name="Sharp S."/>
            <person name="Squares R."/>
            <person name="Squares S."/>
            <person name="Taylor K."/>
            <person name="Warren T."/>
            <person name="Wietzorrek A."/>
            <person name="Woodward J.R."/>
            <person name="Barrell B.G."/>
            <person name="Parkhill J."/>
            <person name="Hopwood D.A."/>
        </authorList>
    </citation>
    <scope>NUCLEOTIDE SEQUENCE [LARGE SCALE GENOMIC DNA]</scope>
    <source>
        <strain>ATCC BAA-471 / A3(2) / M145</strain>
    </source>
</reference>
<name>TAP_STRCO</name>
<keyword id="KW-0031">Aminopeptidase</keyword>
<keyword id="KW-0378">Hydrolase</keyword>
<keyword id="KW-0645">Protease</keyword>
<keyword id="KW-1185">Reference proteome</keyword>
<keyword id="KW-0964">Secreted</keyword>
<keyword id="KW-0732">Signal</keyword>
<proteinExistence type="inferred from homology"/>